<comment type="catalytic activity">
    <reaction evidence="1">
        <text>(S)-2,3,4,5-tetrahydrodipicolinate + succinyl-CoA + H2O = (S)-2-succinylamino-6-oxoheptanedioate + CoA</text>
        <dbReference type="Rhea" id="RHEA:17325"/>
        <dbReference type="ChEBI" id="CHEBI:15377"/>
        <dbReference type="ChEBI" id="CHEBI:15685"/>
        <dbReference type="ChEBI" id="CHEBI:16845"/>
        <dbReference type="ChEBI" id="CHEBI:57287"/>
        <dbReference type="ChEBI" id="CHEBI:57292"/>
        <dbReference type="EC" id="2.3.1.117"/>
    </reaction>
</comment>
<comment type="pathway">
    <text evidence="1">Amino-acid biosynthesis; L-lysine biosynthesis via DAP pathway; LL-2,6-diaminopimelate from (S)-tetrahydrodipicolinate (succinylase route): step 1/3.</text>
</comment>
<comment type="subunit">
    <text evidence="1">Homotrimer.</text>
</comment>
<comment type="subcellular location">
    <subcellularLocation>
        <location evidence="1">Cytoplasm</location>
    </subcellularLocation>
</comment>
<comment type="similarity">
    <text evidence="1">Belongs to the transferase hexapeptide repeat family.</text>
</comment>
<keyword id="KW-0012">Acyltransferase</keyword>
<keyword id="KW-0028">Amino-acid biosynthesis</keyword>
<keyword id="KW-0963">Cytoplasm</keyword>
<keyword id="KW-0220">Diaminopimelate biosynthesis</keyword>
<keyword id="KW-0457">Lysine biosynthesis</keyword>
<keyword id="KW-0677">Repeat</keyword>
<keyword id="KW-0808">Transferase</keyword>
<protein>
    <recommendedName>
        <fullName evidence="1">2,3,4,5-tetrahydropyridine-2,6-dicarboxylate N-succinyltransferase</fullName>
        <ecNumber evidence="1">2.3.1.117</ecNumber>
    </recommendedName>
    <alternativeName>
        <fullName evidence="1">Tetrahydrodipicolinate N-succinyltransferase</fullName>
        <shortName evidence="1">THDP succinyltransferase</shortName>
        <shortName evidence="1">THP succinyltransferase</shortName>
        <shortName evidence="1">Tetrahydropicolinate succinylase</shortName>
    </alternativeName>
</protein>
<proteinExistence type="inferred from homology"/>
<reference key="1">
    <citation type="journal article" date="2004" name="Nucleic Acids Res.">
        <title>Unique features revealed by the genome sequence of Acinetobacter sp. ADP1, a versatile and naturally transformation competent bacterium.</title>
        <authorList>
            <person name="Barbe V."/>
            <person name="Vallenet D."/>
            <person name="Fonknechten N."/>
            <person name="Kreimeyer A."/>
            <person name="Oztas S."/>
            <person name="Labarre L."/>
            <person name="Cruveiller S."/>
            <person name="Robert C."/>
            <person name="Duprat S."/>
            <person name="Wincker P."/>
            <person name="Ornston L.N."/>
            <person name="Weissenbach J."/>
            <person name="Marliere P."/>
            <person name="Cohen G.N."/>
            <person name="Medigue C."/>
        </authorList>
    </citation>
    <scope>NUCLEOTIDE SEQUENCE [LARGE SCALE GENOMIC DNA]</scope>
    <source>
        <strain>ATCC 33305 / BD413 / ADP1</strain>
    </source>
</reference>
<organism>
    <name type="scientific">Acinetobacter baylyi (strain ATCC 33305 / BD413 / ADP1)</name>
    <dbReference type="NCBI Taxonomy" id="62977"/>
    <lineage>
        <taxon>Bacteria</taxon>
        <taxon>Pseudomonadati</taxon>
        <taxon>Pseudomonadota</taxon>
        <taxon>Gammaproteobacteria</taxon>
        <taxon>Moraxellales</taxon>
        <taxon>Moraxellaceae</taxon>
        <taxon>Acinetobacter</taxon>
    </lineage>
</organism>
<dbReference type="EC" id="2.3.1.117" evidence="1"/>
<dbReference type="EMBL" id="CR543861">
    <property type="protein sequence ID" value="CAG69360.1"/>
    <property type="molecule type" value="Genomic_DNA"/>
</dbReference>
<dbReference type="RefSeq" id="WP_004928777.1">
    <property type="nucleotide sequence ID" value="NC_005966.1"/>
</dbReference>
<dbReference type="SMR" id="Q6F9A5"/>
<dbReference type="STRING" id="202950.GCA_001485005_01420"/>
<dbReference type="GeneID" id="45234881"/>
<dbReference type="KEGG" id="aci:ACIAD2599"/>
<dbReference type="eggNOG" id="COG2171">
    <property type="taxonomic scope" value="Bacteria"/>
</dbReference>
<dbReference type="HOGENOM" id="CLU_050859_0_1_6"/>
<dbReference type="OrthoDB" id="9775362at2"/>
<dbReference type="BioCyc" id="ASP62977:ACIAD_RS11820-MONOMER"/>
<dbReference type="UniPathway" id="UPA00034">
    <property type="reaction ID" value="UER00019"/>
</dbReference>
<dbReference type="Proteomes" id="UP000000430">
    <property type="component" value="Chromosome"/>
</dbReference>
<dbReference type="GO" id="GO:0005737">
    <property type="term" value="C:cytoplasm"/>
    <property type="evidence" value="ECO:0007669"/>
    <property type="project" value="UniProtKB-SubCell"/>
</dbReference>
<dbReference type="GO" id="GO:0008666">
    <property type="term" value="F:2,3,4,5-tetrahydropyridine-2,6-dicarboxylate N-succinyltransferase activity"/>
    <property type="evidence" value="ECO:0007669"/>
    <property type="project" value="UniProtKB-UniRule"/>
</dbReference>
<dbReference type="GO" id="GO:0016779">
    <property type="term" value="F:nucleotidyltransferase activity"/>
    <property type="evidence" value="ECO:0007669"/>
    <property type="project" value="TreeGrafter"/>
</dbReference>
<dbReference type="GO" id="GO:0019877">
    <property type="term" value="P:diaminopimelate biosynthetic process"/>
    <property type="evidence" value="ECO:0007669"/>
    <property type="project" value="UniProtKB-UniRule"/>
</dbReference>
<dbReference type="GO" id="GO:0009089">
    <property type="term" value="P:lysine biosynthetic process via diaminopimelate"/>
    <property type="evidence" value="ECO:0007669"/>
    <property type="project" value="UniProtKB-UniRule"/>
</dbReference>
<dbReference type="CDD" id="cd03350">
    <property type="entry name" value="LbH_THP_succinylT"/>
    <property type="match status" value="1"/>
</dbReference>
<dbReference type="Gene3D" id="2.160.10.10">
    <property type="entry name" value="Hexapeptide repeat proteins"/>
    <property type="match status" value="1"/>
</dbReference>
<dbReference type="Gene3D" id="1.10.166.10">
    <property type="entry name" value="Tetrahydrodipicolinate-N-succinyltransferase, N-terminal domain"/>
    <property type="match status" value="1"/>
</dbReference>
<dbReference type="HAMAP" id="MF_00811">
    <property type="entry name" value="DapD"/>
    <property type="match status" value="1"/>
</dbReference>
<dbReference type="InterPro" id="IPR005664">
    <property type="entry name" value="DapD_Trfase_Hexpep_rpt_fam"/>
</dbReference>
<dbReference type="InterPro" id="IPR001451">
    <property type="entry name" value="Hexapep"/>
</dbReference>
<dbReference type="InterPro" id="IPR018357">
    <property type="entry name" value="Hexapep_transf_CS"/>
</dbReference>
<dbReference type="InterPro" id="IPR023180">
    <property type="entry name" value="THP_succinylTrfase_dom1"/>
</dbReference>
<dbReference type="InterPro" id="IPR037133">
    <property type="entry name" value="THP_succinylTrfase_N_sf"/>
</dbReference>
<dbReference type="InterPro" id="IPR011004">
    <property type="entry name" value="Trimer_LpxA-like_sf"/>
</dbReference>
<dbReference type="NCBIfam" id="TIGR00965">
    <property type="entry name" value="dapD"/>
    <property type="match status" value="1"/>
</dbReference>
<dbReference type="NCBIfam" id="NF008808">
    <property type="entry name" value="PRK11830.1"/>
    <property type="match status" value="1"/>
</dbReference>
<dbReference type="PANTHER" id="PTHR19136:SF52">
    <property type="entry name" value="2,3,4,5-TETRAHYDROPYRIDINE-2,6-DICARBOXYLATE N-SUCCINYLTRANSFERASE"/>
    <property type="match status" value="1"/>
</dbReference>
<dbReference type="PANTHER" id="PTHR19136">
    <property type="entry name" value="MOLYBDENUM COFACTOR GUANYLYLTRANSFERASE"/>
    <property type="match status" value="1"/>
</dbReference>
<dbReference type="Pfam" id="PF14602">
    <property type="entry name" value="Hexapep_2"/>
    <property type="match status" value="1"/>
</dbReference>
<dbReference type="Pfam" id="PF14805">
    <property type="entry name" value="THDPS_N_2"/>
    <property type="match status" value="1"/>
</dbReference>
<dbReference type="SUPFAM" id="SSF51161">
    <property type="entry name" value="Trimeric LpxA-like enzymes"/>
    <property type="match status" value="1"/>
</dbReference>
<dbReference type="PROSITE" id="PS00101">
    <property type="entry name" value="HEXAPEP_TRANSFERASES"/>
    <property type="match status" value="1"/>
</dbReference>
<evidence type="ECO:0000255" key="1">
    <source>
        <dbReference type="HAMAP-Rule" id="MF_00811"/>
    </source>
</evidence>
<feature type="chain" id="PRO_0000196908" description="2,3,4,5-tetrahydropyridine-2,6-dicarboxylate N-succinyltransferase">
    <location>
        <begin position="1"/>
        <end position="273"/>
    </location>
</feature>
<feature type="binding site" evidence="1">
    <location>
        <position position="104"/>
    </location>
    <ligand>
        <name>substrate</name>
    </ligand>
</feature>
<feature type="binding site" evidence="1">
    <location>
        <position position="141"/>
    </location>
    <ligand>
        <name>substrate</name>
    </ligand>
</feature>
<accession>Q6F9A5</accession>
<name>DAPD_ACIAD</name>
<sequence>MSQLSTIIEQAFENRANFTAADCPADIRQAVEEALSGLDNGTLRVAEKIDGEWIVHQWLKKAVLLSFKLNDNKPIESGDLAFYDKVDTKFAGWTEEQFKEAGVRVVPPAVARRGSYQAKNVVLMPSYVNIGAYVDENTMVDTWATVGSCAQIGKNVHLSGGVGIGGVLEPLQANPTIIEDNCFIGARSEIVEGVIVEEGAVISMGVYIGQSTRIYDRETGEIHYGRVPAGSVVVPGSLPSKDGKYSLYAAIIVKKVDAQTRAKTSLNDLLRAD</sequence>
<gene>
    <name evidence="1" type="primary">dapD</name>
    <name type="ordered locus">ACIAD2599</name>
</gene>